<accession>Q3KJE5</accession>
<sequence>MKTLWQHCHVATMAQGVYSIIEDAAIVTSGALIEWIGPRSQLPSGEYPAVNDLQGAWVTPGLIDCHTHTVFGGNRSGEFEKRLQGVSYAEIAAAGGGIASTVRATREASEDELFASAAKRLKSLMRDGVTTVEMKSGYGLDLASERKILRVIRRLAAELPISVRSTCLAAHALPPEYQDRADDYIDHICAEMLPALAAEGLVDAVDAFCEYLAFSPEQVERVFIAAQKLGLPVKLHAEQLSSLHGSSLAARYHALSADHLEFMDEADAIAMAESDTVAVLLPGAFYFLRETRLPPMEALRKHKVKIAIASDLNPGTSPALSLRLMLNMACTCFRMTPEEALAGATIHAAQALGMAETHGSLEVGKVADFVAWQIDRPADLAYWLGGELDKRVVRHGVESSL</sequence>
<proteinExistence type="inferred from homology"/>
<keyword id="KW-0963">Cytoplasm</keyword>
<keyword id="KW-0369">Histidine metabolism</keyword>
<keyword id="KW-0378">Hydrolase</keyword>
<keyword id="KW-0408">Iron</keyword>
<keyword id="KW-0479">Metal-binding</keyword>
<keyword id="KW-0862">Zinc</keyword>
<evidence type="ECO:0000255" key="1">
    <source>
        <dbReference type="HAMAP-Rule" id="MF_00372"/>
    </source>
</evidence>
<name>HUTI_PSEPF</name>
<organism>
    <name type="scientific">Pseudomonas fluorescens (strain Pf0-1)</name>
    <dbReference type="NCBI Taxonomy" id="205922"/>
    <lineage>
        <taxon>Bacteria</taxon>
        <taxon>Pseudomonadati</taxon>
        <taxon>Pseudomonadota</taxon>
        <taxon>Gammaproteobacteria</taxon>
        <taxon>Pseudomonadales</taxon>
        <taxon>Pseudomonadaceae</taxon>
        <taxon>Pseudomonas</taxon>
    </lineage>
</organism>
<comment type="function">
    <text evidence="1">Catalyzes the hydrolytic cleavage of the carbon-nitrogen bond in imidazolone-5-propanoate to yield N-formimidoyl-L-glutamate. It is the third step in the universal histidine degradation pathway.</text>
</comment>
<comment type="catalytic activity">
    <reaction evidence="1">
        <text>4-imidazolone-5-propanoate + H2O = N-formimidoyl-L-glutamate</text>
        <dbReference type="Rhea" id="RHEA:23660"/>
        <dbReference type="ChEBI" id="CHEBI:15377"/>
        <dbReference type="ChEBI" id="CHEBI:58928"/>
        <dbReference type="ChEBI" id="CHEBI:77893"/>
        <dbReference type="EC" id="3.5.2.7"/>
    </reaction>
</comment>
<comment type="cofactor">
    <cofactor evidence="1">
        <name>Zn(2+)</name>
        <dbReference type="ChEBI" id="CHEBI:29105"/>
    </cofactor>
    <cofactor evidence="1">
        <name>Fe(3+)</name>
        <dbReference type="ChEBI" id="CHEBI:29034"/>
    </cofactor>
    <text evidence="1">Binds 1 zinc or iron ion per subunit.</text>
</comment>
<comment type="pathway">
    <text evidence="1">Amino-acid degradation; L-histidine degradation into L-glutamate; N-formimidoyl-L-glutamate from L-histidine: step 3/3.</text>
</comment>
<comment type="subcellular location">
    <subcellularLocation>
        <location evidence="1">Cytoplasm</location>
    </subcellularLocation>
</comment>
<comment type="similarity">
    <text evidence="1">Belongs to the metallo-dependent hydrolases superfamily. HutI family.</text>
</comment>
<reference key="1">
    <citation type="journal article" date="2009" name="Genome Biol.">
        <title>Genomic and genetic analyses of diversity and plant interactions of Pseudomonas fluorescens.</title>
        <authorList>
            <person name="Silby M.W."/>
            <person name="Cerdeno-Tarraga A.M."/>
            <person name="Vernikos G.S."/>
            <person name="Giddens S.R."/>
            <person name="Jackson R.W."/>
            <person name="Preston G.M."/>
            <person name="Zhang X.-X."/>
            <person name="Moon C.D."/>
            <person name="Gehrig S.M."/>
            <person name="Godfrey S.A.C."/>
            <person name="Knight C.G."/>
            <person name="Malone J.G."/>
            <person name="Robinson Z."/>
            <person name="Spiers A.J."/>
            <person name="Harris S."/>
            <person name="Challis G.L."/>
            <person name="Yaxley A.M."/>
            <person name="Harris D."/>
            <person name="Seeger K."/>
            <person name="Murphy L."/>
            <person name="Rutter S."/>
            <person name="Squares R."/>
            <person name="Quail M.A."/>
            <person name="Saunders E."/>
            <person name="Mavromatis K."/>
            <person name="Brettin T.S."/>
            <person name="Bentley S.D."/>
            <person name="Hothersall J."/>
            <person name="Stephens E."/>
            <person name="Thomas C.M."/>
            <person name="Parkhill J."/>
            <person name="Levy S.B."/>
            <person name="Rainey P.B."/>
            <person name="Thomson N.R."/>
        </authorList>
    </citation>
    <scope>NUCLEOTIDE SEQUENCE [LARGE SCALE GENOMIC DNA]</scope>
    <source>
        <strain>Pf0-1</strain>
    </source>
</reference>
<feature type="chain" id="PRO_0000306489" description="Imidazolonepropionase">
    <location>
        <begin position="1"/>
        <end position="401"/>
    </location>
</feature>
<feature type="binding site" evidence="1">
    <location>
        <position position="66"/>
    </location>
    <ligand>
        <name>Fe(3+)</name>
        <dbReference type="ChEBI" id="CHEBI:29034"/>
    </ligand>
</feature>
<feature type="binding site" evidence="1">
    <location>
        <position position="66"/>
    </location>
    <ligand>
        <name>Zn(2+)</name>
        <dbReference type="ChEBI" id="CHEBI:29105"/>
    </ligand>
</feature>
<feature type="binding site" evidence="1">
    <location>
        <position position="68"/>
    </location>
    <ligand>
        <name>Fe(3+)</name>
        <dbReference type="ChEBI" id="CHEBI:29034"/>
    </ligand>
</feature>
<feature type="binding site" evidence="1">
    <location>
        <position position="68"/>
    </location>
    <ligand>
        <name>Zn(2+)</name>
        <dbReference type="ChEBI" id="CHEBI:29105"/>
    </ligand>
</feature>
<feature type="binding site" evidence="1">
    <location>
        <position position="75"/>
    </location>
    <ligand>
        <name>4-imidazolone-5-propanoate</name>
        <dbReference type="ChEBI" id="CHEBI:77893"/>
    </ligand>
</feature>
<feature type="binding site" evidence="1">
    <location>
        <position position="138"/>
    </location>
    <ligand>
        <name>4-imidazolone-5-propanoate</name>
        <dbReference type="ChEBI" id="CHEBI:77893"/>
    </ligand>
</feature>
<feature type="binding site" evidence="1">
    <location>
        <position position="138"/>
    </location>
    <ligand>
        <name>N-formimidoyl-L-glutamate</name>
        <dbReference type="ChEBI" id="CHEBI:58928"/>
    </ligand>
</feature>
<feature type="binding site" evidence="1">
    <location>
        <position position="171"/>
    </location>
    <ligand>
        <name>4-imidazolone-5-propanoate</name>
        <dbReference type="ChEBI" id="CHEBI:77893"/>
    </ligand>
</feature>
<feature type="binding site" evidence="1">
    <location>
        <position position="236"/>
    </location>
    <ligand>
        <name>Fe(3+)</name>
        <dbReference type="ChEBI" id="CHEBI:29034"/>
    </ligand>
</feature>
<feature type="binding site" evidence="1">
    <location>
        <position position="236"/>
    </location>
    <ligand>
        <name>Zn(2+)</name>
        <dbReference type="ChEBI" id="CHEBI:29105"/>
    </ligand>
</feature>
<feature type="binding site" evidence="1">
    <location>
        <position position="239"/>
    </location>
    <ligand>
        <name>4-imidazolone-5-propanoate</name>
        <dbReference type="ChEBI" id="CHEBI:77893"/>
    </ligand>
</feature>
<feature type="binding site" evidence="1">
    <location>
        <position position="311"/>
    </location>
    <ligand>
        <name>Fe(3+)</name>
        <dbReference type="ChEBI" id="CHEBI:29034"/>
    </ligand>
</feature>
<feature type="binding site" evidence="1">
    <location>
        <position position="311"/>
    </location>
    <ligand>
        <name>Zn(2+)</name>
        <dbReference type="ChEBI" id="CHEBI:29105"/>
    </ligand>
</feature>
<feature type="binding site" evidence="1">
    <location>
        <position position="313"/>
    </location>
    <ligand>
        <name>N-formimidoyl-L-glutamate</name>
        <dbReference type="ChEBI" id="CHEBI:58928"/>
    </ligand>
</feature>
<feature type="binding site" evidence="1">
    <location>
        <position position="315"/>
    </location>
    <ligand>
        <name>N-formimidoyl-L-glutamate</name>
        <dbReference type="ChEBI" id="CHEBI:58928"/>
    </ligand>
</feature>
<feature type="binding site" evidence="1">
    <location>
        <position position="316"/>
    </location>
    <ligand>
        <name>4-imidazolone-5-propanoate</name>
        <dbReference type="ChEBI" id="CHEBI:77893"/>
    </ligand>
</feature>
<dbReference type="EC" id="3.5.2.7" evidence="1"/>
<dbReference type="EMBL" id="CP000094">
    <property type="protein sequence ID" value="ABA72111.1"/>
    <property type="molecule type" value="Genomic_DNA"/>
</dbReference>
<dbReference type="RefSeq" id="WP_011332050.1">
    <property type="nucleotide sequence ID" value="NC_007492.2"/>
</dbReference>
<dbReference type="SMR" id="Q3KJE5"/>
<dbReference type="KEGG" id="pfo:Pfl01_0367"/>
<dbReference type="eggNOG" id="COG1228">
    <property type="taxonomic scope" value="Bacteria"/>
</dbReference>
<dbReference type="HOGENOM" id="CLU_041647_0_0_6"/>
<dbReference type="UniPathway" id="UPA00379">
    <property type="reaction ID" value="UER00551"/>
</dbReference>
<dbReference type="Proteomes" id="UP000002704">
    <property type="component" value="Chromosome"/>
</dbReference>
<dbReference type="GO" id="GO:0005737">
    <property type="term" value="C:cytoplasm"/>
    <property type="evidence" value="ECO:0007669"/>
    <property type="project" value="UniProtKB-SubCell"/>
</dbReference>
<dbReference type="GO" id="GO:0050480">
    <property type="term" value="F:imidazolonepropionase activity"/>
    <property type="evidence" value="ECO:0007669"/>
    <property type="project" value="UniProtKB-UniRule"/>
</dbReference>
<dbReference type="GO" id="GO:0005506">
    <property type="term" value="F:iron ion binding"/>
    <property type="evidence" value="ECO:0007669"/>
    <property type="project" value="UniProtKB-UniRule"/>
</dbReference>
<dbReference type="GO" id="GO:0008270">
    <property type="term" value="F:zinc ion binding"/>
    <property type="evidence" value="ECO:0007669"/>
    <property type="project" value="UniProtKB-UniRule"/>
</dbReference>
<dbReference type="GO" id="GO:0019556">
    <property type="term" value="P:L-histidine catabolic process to glutamate and formamide"/>
    <property type="evidence" value="ECO:0007669"/>
    <property type="project" value="UniProtKB-UniPathway"/>
</dbReference>
<dbReference type="GO" id="GO:0019557">
    <property type="term" value="P:L-histidine catabolic process to glutamate and formate"/>
    <property type="evidence" value="ECO:0007669"/>
    <property type="project" value="UniProtKB-UniPathway"/>
</dbReference>
<dbReference type="CDD" id="cd01296">
    <property type="entry name" value="Imidazolone-5PH"/>
    <property type="match status" value="1"/>
</dbReference>
<dbReference type="FunFam" id="3.20.20.140:FF:000007">
    <property type="entry name" value="Imidazolonepropionase"/>
    <property type="match status" value="1"/>
</dbReference>
<dbReference type="Gene3D" id="3.20.20.140">
    <property type="entry name" value="Metal-dependent hydrolases"/>
    <property type="match status" value="1"/>
</dbReference>
<dbReference type="Gene3D" id="2.30.40.10">
    <property type="entry name" value="Urease, subunit C, domain 1"/>
    <property type="match status" value="1"/>
</dbReference>
<dbReference type="HAMAP" id="MF_00372">
    <property type="entry name" value="HutI"/>
    <property type="match status" value="1"/>
</dbReference>
<dbReference type="InterPro" id="IPR006680">
    <property type="entry name" value="Amidohydro-rel"/>
</dbReference>
<dbReference type="InterPro" id="IPR005920">
    <property type="entry name" value="HutI"/>
</dbReference>
<dbReference type="InterPro" id="IPR011059">
    <property type="entry name" value="Metal-dep_hydrolase_composite"/>
</dbReference>
<dbReference type="InterPro" id="IPR032466">
    <property type="entry name" value="Metal_Hydrolase"/>
</dbReference>
<dbReference type="NCBIfam" id="TIGR01224">
    <property type="entry name" value="hutI"/>
    <property type="match status" value="1"/>
</dbReference>
<dbReference type="PANTHER" id="PTHR42752">
    <property type="entry name" value="IMIDAZOLONEPROPIONASE"/>
    <property type="match status" value="1"/>
</dbReference>
<dbReference type="PANTHER" id="PTHR42752:SF1">
    <property type="entry name" value="IMIDAZOLONEPROPIONASE-RELATED"/>
    <property type="match status" value="1"/>
</dbReference>
<dbReference type="Pfam" id="PF01979">
    <property type="entry name" value="Amidohydro_1"/>
    <property type="match status" value="1"/>
</dbReference>
<dbReference type="SUPFAM" id="SSF51338">
    <property type="entry name" value="Composite domain of metallo-dependent hydrolases"/>
    <property type="match status" value="1"/>
</dbReference>
<dbReference type="SUPFAM" id="SSF51556">
    <property type="entry name" value="Metallo-dependent hydrolases"/>
    <property type="match status" value="1"/>
</dbReference>
<protein>
    <recommendedName>
        <fullName evidence="1">Imidazolonepropionase</fullName>
        <ecNumber evidence="1">3.5.2.7</ecNumber>
    </recommendedName>
    <alternativeName>
        <fullName evidence="1">Imidazolone-5-propionate hydrolase</fullName>
    </alternativeName>
</protein>
<gene>
    <name evidence="1" type="primary">hutI</name>
    <name type="ordered locus">Pfl01_0367</name>
</gene>